<keyword id="KW-0963">Cytoplasm</keyword>
<keyword id="KW-1267">Proteomics identification</keyword>
<keyword id="KW-1185">Reference proteome</keyword>
<name>FA83E_HUMAN</name>
<dbReference type="EMBL" id="AK000207">
    <property type="protein sequence ID" value="BAA91009.1"/>
    <property type="molecule type" value="mRNA"/>
</dbReference>
<dbReference type="EMBL" id="AC008403">
    <property type="status" value="NOT_ANNOTATED_CDS"/>
    <property type="molecule type" value="Genomic_DNA"/>
</dbReference>
<dbReference type="EMBL" id="AC022154">
    <property type="status" value="NOT_ANNOTATED_CDS"/>
    <property type="molecule type" value="Genomic_DNA"/>
</dbReference>
<dbReference type="EMBL" id="BC111970">
    <property type="protein sequence ID" value="AAI11971.1"/>
    <property type="molecule type" value="mRNA"/>
</dbReference>
<dbReference type="EMBL" id="BC111972">
    <property type="protein sequence ID" value="AAI11973.1"/>
    <property type="molecule type" value="mRNA"/>
</dbReference>
<dbReference type="CCDS" id="CCDS42587.1"/>
<dbReference type="RefSeq" id="NP_060178.2">
    <property type="nucleotide sequence ID" value="NM_017708.4"/>
</dbReference>
<dbReference type="RefSeq" id="XP_005259076.1">
    <property type="nucleotide sequence ID" value="XM_005259019.1"/>
</dbReference>
<dbReference type="RefSeq" id="XP_024307329.1">
    <property type="nucleotide sequence ID" value="XM_024451561.2"/>
</dbReference>
<dbReference type="SMR" id="Q2M2I3"/>
<dbReference type="FunCoup" id="Q2M2I3">
    <property type="interactions" value="10"/>
</dbReference>
<dbReference type="IntAct" id="Q2M2I3">
    <property type="interactions" value="4"/>
</dbReference>
<dbReference type="STRING" id="9606.ENSP00000263266"/>
<dbReference type="GlyGen" id="Q2M2I3">
    <property type="glycosylation" value="1 site"/>
</dbReference>
<dbReference type="iPTMnet" id="Q2M2I3"/>
<dbReference type="PhosphoSitePlus" id="Q2M2I3"/>
<dbReference type="BioMuta" id="FAM83E"/>
<dbReference type="DMDM" id="311033380"/>
<dbReference type="jPOST" id="Q2M2I3"/>
<dbReference type="MassIVE" id="Q2M2I3"/>
<dbReference type="PaxDb" id="9606-ENSP00000263266"/>
<dbReference type="PeptideAtlas" id="Q2M2I3"/>
<dbReference type="ProteomicsDB" id="61353"/>
<dbReference type="Antibodypedia" id="45772">
    <property type="antibodies" value="28 antibodies from 10 providers"/>
</dbReference>
<dbReference type="DNASU" id="54854"/>
<dbReference type="Ensembl" id="ENST00000263266.4">
    <property type="protein sequence ID" value="ENSP00000263266.2"/>
    <property type="gene ID" value="ENSG00000105523.4"/>
</dbReference>
<dbReference type="GeneID" id="54854"/>
<dbReference type="KEGG" id="hsa:54854"/>
<dbReference type="MANE-Select" id="ENST00000263266.4">
    <property type="protein sequence ID" value="ENSP00000263266.2"/>
    <property type="RefSeq nucleotide sequence ID" value="NM_017708.4"/>
    <property type="RefSeq protein sequence ID" value="NP_060178.2"/>
</dbReference>
<dbReference type="UCSC" id="uc002pjn.3">
    <property type="organism name" value="human"/>
</dbReference>
<dbReference type="AGR" id="HGNC:25972"/>
<dbReference type="CTD" id="54854"/>
<dbReference type="DisGeNET" id="54854"/>
<dbReference type="GeneCards" id="FAM83E"/>
<dbReference type="HGNC" id="HGNC:25972">
    <property type="gene designation" value="FAM83E"/>
</dbReference>
<dbReference type="HPA" id="ENSG00000105523">
    <property type="expression patterns" value="Tissue enhanced (intestine, salivary gland, stomach)"/>
</dbReference>
<dbReference type="neXtProt" id="NX_Q2M2I3"/>
<dbReference type="OpenTargets" id="ENSG00000105523"/>
<dbReference type="PharmGKB" id="PA142671852"/>
<dbReference type="VEuPathDB" id="HostDB:ENSG00000105523"/>
<dbReference type="eggNOG" id="ENOG502QWTG">
    <property type="taxonomic scope" value="Eukaryota"/>
</dbReference>
<dbReference type="GeneTree" id="ENSGT00940000161572"/>
<dbReference type="HOGENOM" id="CLU_019056_4_0_1"/>
<dbReference type="InParanoid" id="Q2M2I3"/>
<dbReference type="OMA" id="TYWPGRS"/>
<dbReference type="OrthoDB" id="8943940at2759"/>
<dbReference type="PAN-GO" id="Q2M2I3">
    <property type="GO annotations" value="2 GO annotations based on evolutionary models"/>
</dbReference>
<dbReference type="PhylomeDB" id="Q2M2I3"/>
<dbReference type="TreeFam" id="TF330777"/>
<dbReference type="PathwayCommons" id="Q2M2I3"/>
<dbReference type="SignaLink" id="Q2M2I3"/>
<dbReference type="SIGNOR" id="Q2M2I3"/>
<dbReference type="BioGRID-ORCS" id="54854">
    <property type="hits" value="28 hits in 1148 CRISPR screens"/>
</dbReference>
<dbReference type="ChiTaRS" id="FAM83E">
    <property type="organism name" value="human"/>
</dbReference>
<dbReference type="GenomeRNAi" id="54854"/>
<dbReference type="Pharos" id="Q2M2I3">
    <property type="development level" value="Tdark"/>
</dbReference>
<dbReference type="PRO" id="PR:Q2M2I3"/>
<dbReference type="Proteomes" id="UP000005640">
    <property type="component" value="Chromosome 19"/>
</dbReference>
<dbReference type="RNAct" id="Q2M2I3">
    <property type="molecule type" value="protein"/>
</dbReference>
<dbReference type="Bgee" id="ENSG00000105523">
    <property type="expression patterns" value="Expressed in mucosa of transverse colon and 100 other cell types or tissues"/>
</dbReference>
<dbReference type="ExpressionAtlas" id="Q2M2I3">
    <property type="expression patterns" value="baseline and differential"/>
</dbReference>
<dbReference type="GO" id="GO:0019901">
    <property type="term" value="F:protein kinase binding"/>
    <property type="evidence" value="ECO:0000353"/>
    <property type="project" value="UniProtKB"/>
</dbReference>
<dbReference type="GO" id="GO:0007165">
    <property type="term" value="P:signal transduction"/>
    <property type="evidence" value="ECO:0000318"/>
    <property type="project" value="GO_Central"/>
</dbReference>
<dbReference type="FunFam" id="3.30.870.10:FF:000004">
    <property type="entry name" value="protein FAM83H isoform X2"/>
    <property type="match status" value="1"/>
</dbReference>
<dbReference type="Gene3D" id="3.30.870.10">
    <property type="entry name" value="Endonuclease Chain A"/>
    <property type="match status" value="1"/>
</dbReference>
<dbReference type="InterPro" id="IPR050944">
    <property type="entry name" value="FAM83"/>
</dbReference>
<dbReference type="InterPro" id="IPR012461">
    <property type="entry name" value="SACK1"/>
</dbReference>
<dbReference type="PANTHER" id="PTHR16181">
    <property type="entry name" value="PROTEIN FAM83A-RELATED"/>
    <property type="match status" value="1"/>
</dbReference>
<dbReference type="PANTHER" id="PTHR16181:SF29">
    <property type="entry name" value="PROTEIN FAM83A-RELATED"/>
    <property type="match status" value="1"/>
</dbReference>
<dbReference type="Pfam" id="PF07894">
    <property type="entry name" value="SACK1"/>
    <property type="match status" value="1"/>
</dbReference>
<dbReference type="SUPFAM" id="SSF56024">
    <property type="entry name" value="Phospholipase D/nuclease"/>
    <property type="match status" value="1"/>
</dbReference>
<evidence type="ECO:0000256" key="1">
    <source>
        <dbReference type="SAM" id="MobiDB-lite"/>
    </source>
</evidence>
<evidence type="ECO:0000269" key="2">
    <source>
    </source>
</evidence>
<evidence type="ECO:0000269" key="3">
    <source>
    </source>
</evidence>
<evidence type="ECO:0000269" key="4">
    <source>
    </source>
</evidence>
<evidence type="ECO:0000269" key="5">
    <source>
    </source>
</evidence>
<evidence type="ECO:0000303" key="6">
    <source>
    </source>
</evidence>
<evidence type="ECO:0000305" key="7"/>
<evidence type="ECO:0000305" key="8">
    <source>
    </source>
</evidence>
<evidence type="ECO:0000312" key="9">
    <source>
        <dbReference type="HGNC" id="HGNC:25972"/>
    </source>
</evidence>
<accession>Q2M2I3</accession>
<accession>Q9NXK1</accession>
<gene>
    <name evidence="9" type="primary">FAM83E</name>
</gene>
<reference key="1">
    <citation type="journal article" date="2004" name="Nat. Genet.">
        <title>Complete sequencing and characterization of 21,243 full-length human cDNAs.</title>
        <authorList>
            <person name="Ota T."/>
            <person name="Suzuki Y."/>
            <person name="Nishikawa T."/>
            <person name="Otsuki T."/>
            <person name="Sugiyama T."/>
            <person name="Irie R."/>
            <person name="Wakamatsu A."/>
            <person name="Hayashi K."/>
            <person name="Sato H."/>
            <person name="Nagai K."/>
            <person name="Kimura K."/>
            <person name="Makita H."/>
            <person name="Sekine M."/>
            <person name="Obayashi M."/>
            <person name="Nishi T."/>
            <person name="Shibahara T."/>
            <person name="Tanaka T."/>
            <person name="Ishii S."/>
            <person name="Yamamoto J."/>
            <person name="Saito K."/>
            <person name="Kawai Y."/>
            <person name="Isono Y."/>
            <person name="Nakamura Y."/>
            <person name="Nagahari K."/>
            <person name="Murakami K."/>
            <person name="Yasuda T."/>
            <person name="Iwayanagi T."/>
            <person name="Wagatsuma M."/>
            <person name="Shiratori A."/>
            <person name="Sudo H."/>
            <person name="Hosoiri T."/>
            <person name="Kaku Y."/>
            <person name="Kodaira H."/>
            <person name="Kondo H."/>
            <person name="Sugawara M."/>
            <person name="Takahashi M."/>
            <person name="Kanda K."/>
            <person name="Yokoi T."/>
            <person name="Furuya T."/>
            <person name="Kikkawa E."/>
            <person name="Omura Y."/>
            <person name="Abe K."/>
            <person name="Kamihara K."/>
            <person name="Katsuta N."/>
            <person name="Sato K."/>
            <person name="Tanikawa M."/>
            <person name="Yamazaki M."/>
            <person name="Ninomiya K."/>
            <person name="Ishibashi T."/>
            <person name="Yamashita H."/>
            <person name="Murakawa K."/>
            <person name="Fujimori K."/>
            <person name="Tanai H."/>
            <person name="Kimata M."/>
            <person name="Watanabe M."/>
            <person name="Hiraoka S."/>
            <person name="Chiba Y."/>
            <person name="Ishida S."/>
            <person name="Ono Y."/>
            <person name="Takiguchi S."/>
            <person name="Watanabe S."/>
            <person name="Yosida M."/>
            <person name="Hotuta T."/>
            <person name="Kusano J."/>
            <person name="Kanehori K."/>
            <person name="Takahashi-Fujii A."/>
            <person name="Hara H."/>
            <person name="Tanase T.-O."/>
            <person name="Nomura Y."/>
            <person name="Togiya S."/>
            <person name="Komai F."/>
            <person name="Hara R."/>
            <person name="Takeuchi K."/>
            <person name="Arita M."/>
            <person name="Imose N."/>
            <person name="Musashino K."/>
            <person name="Yuuki H."/>
            <person name="Oshima A."/>
            <person name="Sasaki N."/>
            <person name="Aotsuka S."/>
            <person name="Yoshikawa Y."/>
            <person name="Matsunawa H."/>
            <person name="Ichihara T."/>
            <person name="Shiohata N."/>
            <person name="Sano S."/>
            <person name="Moriya S."/>
            <person name="Momiyama H."/>
            <person name="Satoh N."/>
            <person name="Takami S."/>
            <person name="Terashima Y."/>
            <person name="Suzuki O."/>
            <person name="Nakagawa S."/>
            <person name="Senoh A."/>
            <person name="Mizoguchi H."/>
            <person name="Goto Y."/>
            <person name="Shimizu F."/>
            <person name="Wakebe H."/>
            <person name="Hishigaki H."/>
            <person name="Watanabe T."/>
            <person name="Sugiyama A."/>
            <person name="Takemoto M."/>
            <person name="Kawakami B."/>
            <person name="Yamazaki M."/>
            <person name="Watanabe K."/>
            <person name="Kumagai A."/>
            <person name="Itakura S."/>
            <person name="Fukuzumi Y."/>
            <person name="Fujimori Y."/>
            <person name="Komiyama M."/>
            <person name="Tashiro H."/>
            <person name="Tanigami A."/>
            <person name="Fujiwara T."/>
            <person name="Ono T."/>
            <person name="Yamada K."/>
            <person name="Fujii Y."/>
            <person name="Ozaki K."/>
            <person name="Hirao M."/>
            <person name="Ohmori Y."/>
            <person name="Kawabata A."/>
            <person name="Hikiji T."/>
            <person name="Kobatake N."/>
            <person name="Inagaki H."/>
            <person name="Ikema Y."/>
            <person name="Okamoto S."/>
            <person name="Okitani R."/>
            <person name="Kawakami T."/>
            <person name="Noguchi S."/>
            <person name="Itoh T."/>
            <person name="Shigeta K."/>
            <person name="Senba T."/>
            <person name="Matsumura K."/>
            <person name="Nakajima Y."/>
            <person name="Mizuno T."/>
            <person name="Morinaga M."/>
            <person name="Sasaki M."/>
            <person name="Togashi T."/>
            <person name="Oyama M."/>
            <person name="Hata H."/>
            <person name="Watanabe M."/>
            <person name="Komatsu T."/>
            <person name="Mizushima-Sugano J."/>
            <person name="Satoh T."/>
            <person name="Shirai Y."/>
            <person name="Takahashi Y."/>
            <person name="Nakagawa K."/>
            <person name="Okumura K."/>
            <person name="Nagase T."/>
            <person name="Nomura N."/>
            <person name="Kikuchi H."/>
            <person name="Masuho Y."/>
            <person name="Yamashita R."/>
            <person name="Nakai K."/>
            <person name="Yada T."/>
            <person name="Nakamura Y."/>
            <person name="Ohara O."/>
            <person name="Isogai T."/>
            <person name="Sugano S."/>
        </authorList>
    </citation>
    <scope>NUCLEOTIDE SEQUENCE [LARGE SCALE MRNA]</scope>
    <scope>VARIANTS ALA-91 AND LEU-311</scope>
    <source>
        <tissue>Colon mucosa</tissue>
    </source>
</reference>
<reference key="2">
    <citation type="journal article" date="2004" name="Nature">
        <title>The DNA sequence and biology of human chromosome 19.</title>
        <authorList>
            <person name="Grimwood J."/>
            <person name="Gordon L.A."/>
            <person name="Olsen A.S."/>
            <person name="Terry A."/>
            <person name="Schmutz J."/>
            <person name="Lamerdin J.E."/>
            <person name="Hellsten U."/>
            <person name="Goodstein D."/>
            <person name="Couronne O."/>
            <person name="Tran-Gyamfi M."/>
            <person name="Aerts A."/>
            <person name="Altherr M."/>
            <person name="Ashworth L."/>
            <person name="Bajorek E."/>
            <person name="Black S."/>
            <person name="Branscomb E."/>
            <person name="Caenepeel S."/>
            <person name="Carrano A.V."/>
            <person name="Caoile C."/>
            <person name="Chan Y.M."/>
            <person name="Christensen M."/>
            <person name="Cleland C.A."/>
            <person name="Copeland A."/>
            <person name="Dalin E."/>
            <person name="Dehal P."/>
            <person name="Denys M."/>
            <person name="Detter J.C."/>
            <person name="Escobar J."/>
            <person name="Flowers D."/>
            <person name="Fotopulos D."/>
            <person name="Garcia C."/>
            <person name="Georgescu A.M."/>
            <person name="Glavina T."/>
            <person name="Gomez M."/>
            <person name="Gonzales E."/>
            <person name="Groza M."/>
            <person name="Hammon N."/>
            <person name="Hawkins T."/>
            <person name="Haydu L."/>
            <person name="Ho I."/>
            <person name="Huang W."/>
            <person name="Israni S."/>
            <person name="Jett J."/>
            <person name="Kadner K."/>
            <person name="Kimball H."/>
            <person name="Kobayashi A."/>
            <person name="Larionov V."/>
            <person name="Leem S.-H."/>
            <person name="Lopez F."/>
            <person name="Lou Y."/>
            <person name="Lowry S."/>
            <person name="Malfatti S."/>
            <person name="Martinez D."/>
            <person name="McCready P.M."/>
            <person name="Medina C."/>
            <person name="Morgan J."/>
            <person name="Nelson K."/>
            <person name="Nolan M."/>
            <person name="Ovcharenko I."/>
            <person name="Pitluck S."/>
            <person name="Pollard M."/>
            <person name="Popkie A.P."/>
            <person name="Predki P."/>
            <person name="Quan G."/>
            <person name="Ramirez L."/>
            <person name="Rash S."/>
            <person name="Retterer J."/>
            <person name="Rodriguez A."/>
            <person name="Rogers S."/>
            <person name="Salamov A."/>
            <person name="Salazar A."/>
            <person name="She X."/>
            <person name="Smith D."/>
            <person name="Slezak T."/>
            <person name="Solovyev V."/>
            <person name="Thayer N."/>
            <person name="Tice H."/>
            <person name="Tsai M."/>
            <person name="Ustaszewska A."/>
            <person name="Vo N."/>
            <person name="Wagner M."/>
            <person name="Wheeler J."/>
            <person name="Wu K."/>
            <person name="Xie G."/>
            <person name="Yang J."/>
            <person name="Dubchak I."/>
            <person name="Furey T.S."/>
            <person name="DeJong P."/>
            <person name="Dickson M."/>
            <person name="Gordon D."/>
            <person name="Eichler E.E."/>
            <person name="Pennacchio L.A."/>
            <person name="Richardson P."/>
            <person name="Stubbs L."/>
            <person name="Rokhsar D.S."/>
            <person name="Myers R.M."/>
            <person name="Rubin E.M."/>
            <person name="Lucas S.M."/>
        </authorList>
    </citation>
    <scope>NUCLEOTIDE SEQUENCE [LARGE SCALE GENOMIC DNA]</scope>
</reference>
<reference key="3">
    <citation type="journal article" date="2004" name="Genome Res.">
        <title>The status, quality, and expansion of the NIH full-length cDNA project: the Mammalian Gene Collection (MGC).</title>
        <authorList>
            <consortium name="The MGC Project Team"/>
        </authorList>
    </citation>
    <scope>NUCLEOTIDE SEQUENCE [LARGE SCALE MRNA]</scope>
    <scope>VARIANT ALA-91</scope>
</reference>
<reference key="4">
    <citation type="journal article" date="2014" name="Mol. Cancer Res.">
        <title>Conserved oncogenic behavior of the FAM83 family regulates MAPK signaling in human cancer.</title>
        <authorList>
            <person name="Cipriano R."/>
            <person name="Miskimen K.L."/>
            <person name="Bryson B.L."/>
            <person name="Foy C.R."/>
            <person name="Bartel C.A."/>
            <person name="Jackson M.W."/>
        </authorList>
    </citation>
    <scope>FUNCTION</scope>
    <scope>INTERACTION WITH RAF1</scope>
</reference>
<reference key="5">
    <citation type="journal article" date="2018" name="Sci. Signal.">
        <title>The DUF1669 domain of FAM83 family proteins anchor casein kinase 1 isoforms.</title>
        <authorList>
            <person name="Fulcher L.J."/>
            <person name="Bozatzi P."/>
            <person name="Tachie-Menson T."/>
            <person name="Wu K.Z.L."/>
            <person name="Cummins T.D."/>
            <person name="Bufton J.C."/>
            <person name="Pinkas D.M."/>
            <person name="Dunbar K."/>
            <person name="Shrestha S."/>
            <person name="Wood N.T."/>
            <person name="Weidlich S."/>
            <person name="Macartney T.J."/>
            <person name="Varghese J."/>
            <person name="Gourlay R."/>
            <person name="Campbell D.G."/>
            <person name="Dingwell K.S."/>
            <person name="Smith J.C."/>
            <person name="Bullock A.N."/>
            <person name="Sapkota G.P."/>
        </authorList>
    </citation>
    <scope>INTERACTION WITH CSNK1A1; CSNK1A1L; CSNK1D AND CSNK1E</scope>
    <scope>SUBCELLULAR LOCATION</scope>
    <scope>MUTAGENESIS OF ASP-243 AND PHE-277</scope>
</reference>
<organism>
    <name type="scientific">Homo sapiens</name>
    <name type="common">Human</name>
    <dbReference type="NCBI Taxonomy" id="9606"/>
    <lineage>
        <taxon>Eukaryota</taxon>
        <taxon>Metazoa</taxon>
        <taxon>Chordata</taxon>
        <taxon>Craniata</taxon>
        <taxon>Vertebrata</taxon>
        <taxon>Euteleostomi</taxon>
        <taxon>Mammalia</taxon>
        <taxon>Eutheria</taxon>
        <taxon>Euarchontoglires</taxon>
        <taxon>Primates</taxon>
        <taxon>Haplorrhini</taxon>
        <taxon>Catarrhini</taxon>
        <taxon>Hominidae</taxon>
        <taxon>Homo</taxon>
    </lineage>
</organism>
<sequence length="478" mass="51780">MAASQLAALEGVDSGPRVPGASPGFLYSEGQRLALEALLSKGAEAFQTCVQREELWPFLSADEVQGLAAAAEDWTVAKQEPSGMAEGATTTDVDAGSLSYWPGQSEQPAPVLRLGWPVDSAWKGITRAQLYTQPPGEGQPPLKELVRLEIQAAHKLVAVVMDVFTDPDLLLDLVDAATRRWVPVYLLLDRQQLPAFLELAQQLGVNPWNTENVDVRVVRGCSFQSRWRRQVSGTVREKFVLLDGERVISGSYSFTWSDARLHRGLVTLLTGEIVDAFSLEFRTLYAASCPLPPAPPQKPSVIGGLQRGRSPHRVSRRRSVAPASPPPPDGPLAHRLAACRVSPATPGPALSDILRSVQRARTPSGPPARPSRSMWDLSRLSQLSGSSDGDNELKKSWGSKDTPAKALMRQRGTGGGPWGEVDSRPPWGGALPLPPAHRLRYLSPARRRFGGDATFKLQEPRGVRPSDWAPRAGLGGQP</sequence>
<protein>
    <recommendedName>
        <fullName evidence="7">Protein FAM83E</fullName>
    </recommendedName>
</protein>
<feature type="chain" id="PRO_0000314929" description="Protein FAM83E">
    <location>
        <begin position="1"/>
        <end position="478"/>
    </location>
</feature>
<feature type="region of interest" description="DUF1669" evidence="8">
    <location>
        <begin position="1"/>
        <end position="293"/>
    </location>
</feature>
<feature type="region of interest" description="Disordered" evidence="1">
    <location>
        <begin position="292"/>
        <end position="334"/>
    </location>
</feature>
<feature type="region of interest" description="Disordered" evidence="1">
    <location>
        <begin position="359"/>
        <end position="436"/>
    </location>
</feature>
<feature type="region of interest" description="Disordered" evidence="1">
    <location>
        <begin position="452"/>
        <end position="478"/>
    </location>
</feature>
<feature type="compositionally biased region" description="Basic residues" evidence="1">
    <location>
        <begin position="309"/>
        <end position="319"/>
    </location>
</feature>
<feature type="compositionally biased region" description="Polar residues" evidence="1">
    <location>
        <begin position="379"/>
        <end position="388"/>
    </location>
</feature>
<feature type="sequence variant" id="VAR_038130" description="In dbSNP:rs447802." evidence="2 3">
    <original>T</original>
    <variation>A</variation>
    <location>
        <position position="91"/>
    </location>
</feature>
<feature type="sequence variant" id="VAR_038131" description="In dbSNP:rs3745728." evidence="2">
    <original>P</original>
    <variation>L</variation>
    <location>
        <position position="311"/>
    </location>
</feature>
<feature type="sequence variant" id="VAR_038132" description="In dbSNP:rs3745727.">
    <original>R</original>
    <variation>H</variation>
    <location>
        <position position="372"/>
    </location>
</feature>
<feature type="mutagenesis site" description="Decreased interaction with CSNK1A1 and CSNK1E." evidence="5">
    <original>D</original>
    <variation>A</variation>
    <location>
        <position position="243"/>
    </location>
</feature>
<feature type="mutagenesis site" description="Decreased interaction with CSNK1A1 and CSNK1E." evidence="5">
    <original>F</original>
    <variation>A</variation>
    <location>
        <position position="277"/>
    </location>
</feature>
<feature type="sequence conflict" description="In Ref. 1; BAA91009." evidence="7" ref="1">
    <original>Q</original>
    <variation>R</variation>
    <location>
        <position position="5"/>
    </location>
</feature>
<feature type="sequence conflict" description="In Ref. 1; BAA91009." evidence="7" ref="1">
    <original>P</original>
    <variation>S</variation>
    <location>
        <position position="425"/>
    </location>
</feature>
<feature type="sequence conflict" description="In Ref. 1; BAA91009." evidence="7" ref="1">
    <original>V</original>
    <variation>I</variation>
    <location>
        <position position="463"/>
    </location>
</feature>
<proteinExistence type="evidence at protein level"/>
<comment type="function">
    <text evidence="6">May play a role in MAPK signaling.</text>
</comment>
<comment type="subunit">
    <text evidence="4 5">Directly interacts (via DUF1669) with CSNK1A1, CSNK1A1L, CSNK1D and CSNK1E (PubMed:29789297). May interact with RAF1 (PubMed:24736947).</text>
</comment>
<comment type="interaction">
    <interactant intactId="EBI-21993639">
        <id>Q2M2I3</id>
    </interactant>
    <interactant intactId="EBI-1383726">
        <id>P48729</id>
        <label>CSNK1A1</label>
    </interactant>
    <organismsDiffer>false</organismsDiffer>
    <experiments>6</experiments>
</comment>
<comment type="subcellular location">
    <subcellularLocation>
        <location evidence="5">Cytoplasm</location>
    </subcellularLocation>
    <subcellularLocation>
        <location evidence="5">Cytoplasm</location>
        <location evidence="5">Perinuclear region</location>
    </subcellularLocation>
</comment>
<comment type="domain">
    <text evidence="8">All members of the FAM83 family of proteins share a conserved N-terminal DUF1669 (domain of unknown function 1669) domain of about 300 amino acids. This domain mediates the interaction with casein kinase 1 (CK1) isoforms. Therefore, it has been proposed to rename DUF1669 the polypeptide anchor of CK1 domain.</text>
</comment>
<comment type="similarity">
    <text evidence="7">Belongs to the FAM83 family.</text>
</comment>